<protein>
    <recommendedName>
        <fullName evidence="1">Chaperone protein DnaK</fullName>
    </recommendedName>
    <alternativeName>
        <fullName evidence="1">HSP70</fullName>
    </alternativeName>
    <alternativeName>
        <fullName evidence="1">Heat shock 70 kDa protein</fullName>
    </alternativeName>
    <alternativeName>
        <fullName evidence="1">Heat shock protein 70</fullName>
    </alternativeName>
</protein>
<feature type="chain" id="PRO_1000079230" description="Chaperone protein DnaK">
    <location>
        <begin position="1"/>
        <end position="635"/>
    </location>
</feature>
<feature type="region of interest" description="Disordered" evidence="2">
    <location>
        <begin position="600"/>
        <end position="635"/>
    </location>
</feature>
<feature type="compositionally biased region" description="Low complexity" evidence="2">
    <location>
        <begin position="600"/>
        <end position="617"/>
    </location>
</feature>
<feature type="modified residue" description="Phosphothreonine; by autocatalysis" evidence="1">
    <location>
        <position position="199"/>
    </location>
</feature>
<dbReference type="EMBL" id="CP000947">
    <property type="protein sequence ID" value="ACA32005.1"/>
    <property type="molecule type" value="Genomic_DNA"/>
</dbReference>
<dbReference type="RefSeq" id="WP_012341224.1">
    <property type="nucleotide sequence ID" value="NC_010519.1"/>
</dbReference>
<dbReference type="SMR" id="B0UWR4"/>
<dbReference type="STRING" id="228400.HSM_0368"/>
<dbReference type="GeneID" id="31486648"/>
<dbReference type="KEGG" id="hsm:HSM_0368"/>
<dbReference type="HOGENOM" id="CLU_005965_2_1_6"/>
<dbReference type="GO" id="GO:0005524">
    <property type="term" value="F:ATP binding"/>
    <property type="evidence" value="ECO:0007669"/>
    <property type="project" value="UniProtKB-UniRule"/>
</dbReference>
<dbReference type="GO" id="GO:0140662">
    <property type="term" value="F:ATP-dependent protein folding chaperone"/>
    <property type="evidence" value="ECO:0007669"/>
    <property type="project" value="InterPro"/>
</dbReference>
<dbReference type="GO" id="GO:0051082">
    <property type="term" value="F:unfolded protein binding"/>
    <property type="evidence" value="ECO:0007669"/>
    <property type="project" value="InterPro"/>
</dbReference>
<dbReference type="CDD" id="cd10234">
    <property type="entry name" value="ASKHA_NBD_HSP70_DnaK-like"/>
    <property type="match status" value="1"/>
</dbReference>
<dbReference type="FunFam" id="2.60.34.10:FF:000014">
    <property type="entry name" value="Chaperone protein DnaK HSP70"/>
    <property type="match status" value="1"/>
</dbReference>
<dbReference type="FunFam" id="1.20.1270.10:FF:000001">
    <property type="entry name" value="Molecular chaperone DnaK"/>
    <property type="match status" value="1"/>
</dbReference>
<dbReference type="FunFam" id="3.30.420.40:FF:000004">
    <property type="entry name" value="Molecular chaperone DnaK"/>
    <property type="match status" value="1"/>
</dbReference>
<dbReference type="FunFam" id="3.90.640.10:FF:000003">
    <property type="entry name" value="Molecular chaperone DnaK"/>
    <property type="match status" value="1"/>
</dbReference>
<dbReference type="Gene3D" id="1.20.1270.10">
    <property type="match status" value="1"/>
</dbReference>
<dbReference type="Gene3D" id="3.30.420.40">
    <property type="match status" value="2"/>
</dbReference>
<dbReference type="Gene3D" id="3.90.640.10">
    <property type="entry name" value="Actin, Chain A, domain 4"/>
    <property type="match status" value="1"/>
</dbReference>
<dbReference type="Gene3D" id="2.60.34.10">
    <property type="entry name" value="Substrate Binding Domain Of DNAk, Chain A, domain 1"/>
    <property type="match status" value="1"/>
</dbReference>
<dbReference type="HAMAP" id="MF_00332">
    <property type="entry name" value="DnaK"/>
    <property type="match status" value="1"/>
</dbReference>
<dbReference type="InterPro" id="IPR043129">
    <property type="entry name" value="ATPase_NBD"/>
</dbReference>
<dbReference type="InterPro" id="IPR012725">
    <property type="entry name" value="Chaperone_DnaK"/>
</dbReference>
<dbReference type="InterPro" id="IPR018181">
    <property type="entry name" value="Heat_shock_70_CS"/>
</dbReference>
<dbReference type="InterPro" id="IPR029048">
    <property type="entry name" value="HSP70_C_sf"/>
</dbReference>
<dbReference type="InterPro" id="IPR029047">
    <property type="entry name" value="HSP70_peptide-bd_sf"/>
</dbReference>
<dbReference type="InterPro" id="IPR013126">
    <property type="entry name" value="Hsp_70_fam"/>
</dbReference>
<dbReference type="NCBIfam" id="NF001413">
    <property type="entry name" value="PRK00290.1"/>
    <property type="match status" value="1"/>
</dbReference>
<dbReference type="NCBIfam" id="NF003520">
    <property type="entry name" value="PRK05183.1"/>
    <property type="match status" value="1"/>
</dbReference>
<dbReference type="NCBIfam" id="TIGR02350">
    <property type="entry name" value="prok_dnaK"/>
    <property type="match status" value="1"/>
</dbReference>
<dbReference type="PANTHER" id="PTHR19375">
    <property type="entry name" value="HEAT SHOCK PROTEIN 70KDA"/>
    <property type="match status" value="1"/>
</dbReference>
<dbReference type="Pfam" id="PF00012">
    <property type="entry name" value="HSP70"/>
    <property type="match status" value="1"/>
</dbReference>
<dbReference type="PRINTS" id="PR00301">
    <property type="entry name" value="HEATSHOCK70"/>
</dbReference>
<dbReference type="SUPFAM" id="SSF53067">
    <property type="entry name" value="Actin-like ATPase domain"/>
    <property type="match status" value="2"/>
</dbReference>
<dbReference type="SUPFAM" id="SSF100934">
    <property type="entry name" value="Heat shock protein 70kD (HSP70), C-terminal subdomain"/>
    <property type="match status" value="1"/>
</dbReference>
<dbReference type="SUPFAM" id="SSF100920">
    <property type="entry name" value="Heat shock protein 70kD (HSP70), peptide-binding domain"/>
    <property type="match status" value="1"/>
</dbReference>
<dbReference type="PROSITE" id="PS00297">
    <property type="entry name" value="HSP70_1"/>
    <property type="match status" value="1"/>
</dbReference>
<dbReference type="PROSITE" id="PS00329">
    <property type="entry name" value="HSP70_2"/>
    <property type="match status" value="1"/>
</dbReference>
<dbReference type="PROSITE" id="PS01036">
    <property type="entry name" value="HSP70_3"/>
    <property type="match status" value="1"/>
</dbReference>
<comment type="function">
    <text evidence="1">Acts as a chaperone.</text>
</comment>
<comment type="induction">
    <text evidence="1">By stress conditions e.g. heat shock.</text>
</comment>
<comment type="similarity">
    <text evidence="1">Belongs to the heat shock protein 70 family.</text>
</comment>
<reference key="1">
    <citation type="submission" date="2008-02" db="EMBL/GenBank/DDBJ databases">
        <title>Complete sequence of Haemophilus somnus 2336.</title>
        <authorList>
            <consortium name="US DOE Joint Genome Institute"/>
            <person name="Siddaramappa S."/>
            <person name="Duncan A.J."/>
            <person name="Challacombe J.F."/>
            <person name="Rainey D."/>
            <person name="Gillaspy A.F."/>
            <person name="Carson M."/>
            <person name="Gipson J."/>
            <person name="Gipson M."/>
            <person name="Bruce D."/>
            <person name="Detter J.C."/>
            <person name="Han C.S."/>
            <person name="Land M."/>
            <person name="Tapia R."/>
            <person name="Thompson L.S."/>
            <person name="Orvis J."/>
            <person name="Zaitshik J."/>
            <person name="Barnes G."/>
            <person name="Brettin T.S."/>
            <person name="Dyer D.W."/>
            <person name="Inzana T.J."/>
        </authorList>
    </citation>
    <scope>NUCLEOTIDE SEQUENCE [LARGE SCALE GENOMIC DNA]</scope>
    <source>
        <strain>2336</strain>
    </source>
</reference>
<sequence length="635" mass="68489">MGKIIGIDLGTTNSCVAVMDGDKPRVIENAEGERTTPSIIAYTNDNETLVGQPAKRQAVTNPKNTLFAIKRLIGRRFEDQEVQRDVAIMPFEITKADNGDAWVSVKGEKMAPPQISAEVLKKMKKTAEDFLGETVTEAVITVPAYFNDAQRQATKDAGRIAGLEVKRIINEPTAAALAYGLDKGKGNQTIAVYDLGGGTFDLSIIEIDEVGGEKTFEVLATNGDTHLGGEDFDNRVINYLVDEFKKEQGVDLRNDPLAMQRLKEAGEKAKIELSSAQQTDVNLPYITADATGPKHLNIKLTRAKLEALVEDLVARSMEPVKVALSDAGLSVSEINDVILVGGQTRMPLVQQKVAEFFGKEPRRDVNPDEAVAIGAAVQGGVLAGDVKDVLLLDVTPLSLGIETMGGVMTTLIEKNTTIPTKKSQVFSTAEDNQSAVTIHVLQGERKQASANKSLGQFNLEGINPAPRGMPQIEVTFDIDADGIIHVSAKDKGTGKEQKITIKASSGLSDEEIQQMVRDAEANAEADRKFEELVQARNQADHLVHSTRKQLAEVGEKLSAEDKAPIESAVNELETAAKGEDKTEIDAKVQALIQVSEKLLQASQQQAQADAGAQQSQSTKGGEDVVDAEFEEVKDK</sequence>
<gene>
    <name evidence="1" type="primary">dnaK</name>
    <name type="ordered locus">HSM_0368</name>
</gene>
<proteinExistence type="inferred from homology"/>
<accession>B0UWR4</accession>
<keyword id="KW-0067">ATP-binding</keyword>
<keyword id="KW-0143">Chaperone</keyword>
<keyword id="KW-0547">Nucleotide-binding</keyword>
<keyword id="KW-0597">Phosphoprotein</keyword>
<keyword id="KW-0346">Stress response</keyword>
<evidence type="ECO:0000255" key="1">
    <source>
        <dbReference type="HAMAP-Rule" id="MF_00332"/>
    </source>
</evidence>
<evidence type="ECO:0000256" key="2">
    <source>
        <dbReference type="SAM" id="MobiDB-lite"/>
    </source>
</evidence>
<organism>
    <name type="scientific">Histophilus somni (strain 2336)</name>
    <name type="common">Haemophilus somnus</name>
    <dbReference type="NCBI Taxonomy" id="228400"/>
    <lineage>
        <taxon>Bacteria</taxon>
        <taxon>Pseudomonadati</taxon>
        <taxon>Pseudomonadota</taxon>
        <taxon>Gammaproteobacteria</taxon>
        <taxon>Pasteurellales</taxon>
        <taxon>Pasteurellaceae</taxon>
        <taxon>Histophilus</taxon>
    </lineage>
</organism>
<name>DNAK_HISS2</name>